<accession>C3P9Q4</accession>
<protein>
    <recommendedName>
        <fullName evidence="1">Small ribosomal subunit protein uS10</fullName>
    </recommendedName>
    <alternativeName>
        <fullName evidence="2">30S ribosomal protein S10</fullName>
    </alternativeName>
</protein>
<name>RS10_BACAA</name>
<gene>
    <name evidence="1" type="primary">rpsJ</name>
    <name type="ordered locus">BAA_0125</name>
</gene>
<proteinExistence type="inferred from homology"/>
<reference key="1">
    <citation type="submission" date="2009-04" db="EMBL/GenBank/DDBJ databases">
        <title>Genome sequence of Bacillus anthracis A0248.</title>
        <authorList>
            <person name="Dodson R.J."/>
            <person name="Munk A.C."/>
            <person name="Bruce D."/>
            <person name="Detter C."/>
            <person name="Tapia R."/>
            <person name="Sutton G."/>
            <person name="Sims D."/>
            <person name="Brettin T."/>
        </authorList>
    </citation>
    <scope>NUCLEOTIDE SEQUENCE [LARGE SCALE GENOMIC DNA]</scope>
    <source>
        <strain>A0248</strain>
    </source>
</reference>
<comment type="function">
    <text evidence="1">Involved in the binding of tRNA to the ribosomes.</text>
</comment>
<comment type="subunit">
    <text evidence="1">Part of the 30S ribosomal subunit.</text>
</comment>
<comment type="similarity">
    <text evidence="1">Belongs to the universal ribosomal protein uS10 family.</text>
</comment>
<dbReference type="EMBL" id="CP001598">
    <property type="protein sequence ID" value="ACQ50363.1"/>
    <property type="molecule type" value="Genomic_DNA"/>
</dbReference>
<dbReference type="RefSeq" id="WP_001040594.1">
    <property type="nucleotide sequence ID" value="NC_012659.1"/>
</dbReference>
<dbReference type="SMR" id="C3P9Q4"/>
<dbReference type="GeneID" id="45020154"/>
<dbReference type="KEGG" id="bai:BAA_0125"/>
<dbReference type="HOGENOM" id="CLU_122625_1_3_9"/>
<dbReference type="GO" id="GO:1990904">
    <property type="term" value="C:ribonucleoprotein complex"/>
    <property type="evidence" value="ECO:0007669"/>
    <property type="project" value="UniProtKB-KW"/>
</dbReference>
<dbReference type="GO" id="GO:0005840">
    <property type="term" value="C:ribosome"/>
    <property type="evidence" value="ECO:0007669"/>
    <property type="project" value="UniProtKB-KW"/>
</dbReference>
<dbReference type="GO" id="GO:0003735">
    <property type="term" value="F:structural constituent of ribosome"/>
    <property type="evidence" value="ECO:0007669"/>
    <property type="project" value="InterPro"/>
</dbReference>
<dbReference type="GO" id="GO:0000049">
    <property type="term" value="F:tRNA binding"/>
    <property type="evidence" value="ECO:0007669"/>
    <property type="project" value="UniProtKB-UniRule"/>
</dbReference>
<dbReference type="GO" id="GO:0006412">
    <property type="term" value="P:translation"/>
    <property type="evidence" value="ECO:0007669"/>
    <property type="project" value="UniProtKB-UniRule"/>
</dbReference>
<dbReference type="FunFam" id="3.30.70.600:FF:000001">
    <property type="entry name" value="30S ribosomal protein S10"/>
    <property type="match status" value="1"/>
</dbReference>
<dbReference type="Gene3D" id="3.30.70.600">
    <property type="entry name" value="Ribosomal protein S10 domain"/>
    <property type="match status" value="1"/>
</dbReference>
<dbReference type="HAMAP" id="MF_00508">
    <property type="entry name" value="Ribosomal_uS10"/>
    <property type="match status" value="1"/>
</dbReference>
<dbReference type="InterPro" id="IPR001848">
    <property type="entry name" value="Ribosomal_uS10"/>
</dbReference>
<dbReference type="InterPro" id="IPR018268">
    <property type="entry name" value="Ribosomal_uS10_CS"/>
</dbReference>
<dbReference type="InterPro" id="IPR027486">
    <property type="entry name" value="Ribosomal_uS10_dom"/>
</dbReference>
<dbReference type="InterPro" id="IPR036838">
    <property type="entry name" value="Ribosomal_uS10_dom_sf"/>
</dbReference>
<dbReference type="NCBIfam" id="NF001861">
    <property type="entry name" value="PRK00596.1"/>
    <property type="match status" value="1"/>
</dbReference>
<dbReference type="NCBIfam" id="TIGR01049">
    <property type="entry name" value="rpsJ_bact"/>
    <property type="match status" value="1"/>
</dbReference>
<dbReference type="PANTHER" id="PTHR11700">
    <property type="entry name" value="30S RIBOSOMAL PROTEIN S10 FAMILY MEMBER"/>
    <property type="match status" value="1"/>
</dbReference>
<dbReference type="Pfam" id="PF00338">
    <property type="entry name" value="Ribosomal_S10"/>
    <property type="match status" value="1"/>
</dbReference>
<dbReference type="PRINTS" id="PR00971">
    <property type="entry name" value="RIBOSOMALS10"/>
</dbReference>
<dbReference type="SMART" id="SM01403">
    <property type="entry name" value="Ribosomal_S10"/>
    <property type="match status" value="1"/>
</dbReference>
<dbReference type="SUPFAM" id="SSF54999">
    <property type="entry name" value="Ribosomal protein S10"/>
    <property type="match status" value="1"/>
</dbReference>
<dbReference type="PROSITE" id="PS00361">
    <property type="entry name" value="RIBOSOMAL_S10"/>
    <property type="match status" value="1"/>
</dbReference>
<feature type="chain" id="PRO_1000196283" description="Small ribosomal subunit protein uS10">
    <location>
        <begin position="1"/>
        <end position="102"/>
    </location>
</feature>
<organism>
    <name type="scientific">Bacillus anthracis (strain A0248)</name>
    <dbReference type="NCBI Taxonomy" id="592021"/>
    <lineage>
        <taxon>Bacteria</taxon>
        <taxon>Bacillati</taxon>
        <taxon>Bacillota</taxon>
        <taxon>Bacilli</taxon>
        <taxon>Bacillales</taxon>
        <taxon>Bacillaceae</taxon>
        <taxon>Bacillus</taxon>
        <taxon>Bacillus cereus group</taxon>
    </lineage>
</organism>
<keyword id="KW-0687">Ribonucleoprotein</keyword>
<keyword id="KW-0689">Ribosomal protein</keyword>
<sequence>MAKEKIRIRLKAYDHRILDQSADKIVETAKRSGATVSGPIPLPTEKTVYTILRAVHKYKDSREQFEMRTHKRLIDIVSPTPQTVDSLMRLDLPSGVDIEIKL</sequence>
<evidence type="ECO:0000255" key="1">
    <source>
        <dbReference type="HAMAP-Rule" id="MF_00508"/>
    </source>
</evidence>
<evidence type="ECO:0000305" key="2"/>